<dbReference type="EMBL" id="AL009126">
    <property type="protein sequence ID" value="CAB14020.1"/>
    <property type="molecule type" value="Genomic_DNA"/>
</dbReference>
<dbReference type="RefSeq" id="NP_389985.1">
    <property type="nucleotide sequence ID" value="NC_000964.3"/>
</dbReference>
<dbReference type="RefSeq" id="WP_009967517.1">
    <property type="nucleotide sequence ID" value="NZ_OZ025638.1"/>
</dbReference>
<dbReference type="SMR" id="O31943"/>
<dbReference type="FunCoup" id="O31943">
    <property type="interactions" value="14"/>
</dbReference>
<dbReference type="STRING" id="224308.BSU21020"/>
<dbReference type="PaxDb" id="224308-BSU21020"/>
<dbReference type="EnsemblBacteria" id="CAB14020">
    <property type="protein sequence ID" value="CAB14020"/>
    <property type="gene ID" value="BSU_21020"/>
</dbReference>
<dbReference type="GeneID" id="939169"/>
<dbReference type="KEGG" id="bsu:BSU21020"/>
<dbReference type="PATRIC" id="fig|224308.179.peg.2295"/>
<dbReference type="eggNOG" id="COG1395">
    <property type="taxonomic scope" value="Bacteria"/>
</dbReference>
<dbReference type="InParanoid" id="O31943"/>
<dbReference type="OrthoDB" id="72638at2"/>
<dbReference type="PhylomeDB" id="O31943"/>
<dbReference type="BioCyc" id="BSUB:BSU21020-MONOMER"/>
<dbReference type="Proteomes" id="UP000001570">
    <property type="component" value="Chromosome"/>
</dbReference>
<dbReference type="GO" id="GO:0003677">
    <property type="term" value="F:DNA binding"/>
    <property type="evidence" value="ECO:0007669"/>
    <property type="project" value="UniProtKB-KW"/>
</dbReference>
<dbReference type="CDD" id="cd00093">
    <property type="entry name" value="HTH_XRE"/>
    <property type="match status" value="1"/>
</dbReference>
<dbReference type="Gene3D" id="1.10.260.40">
    <property type="entry name" value="lambda repressor-like DNA-binding domains"/>
    <property type="match status" value="1"/>
</dbReference>
<dbReference type="InterPro" id="IPR001387">
    <property type="entry name" value="Cro/C1-type_HTH"/>
</dbReference>
<dbReference type="InterPro" id="IPR010982">
    <property type="entry name" value="Lambda_DNA-bd_dom_sf"/>
</dbReference>
<dbReference type="PANTHER" id="PTHR46558:SF14">
    <property type="entry name" value="HTH-TYPE TRANSCRIPTIONAL REGULATOR ANSR"/>
    <property type="match status" value="1"/>
</dbReference>
<dbReference type="PANTHER" id="PTHR46558">
    <property type="entry name" value="TRACRIPTIONAL REGULATORY PROTEIN-RELATED-RELATED"/>
    <property type="match status" value="1"/>
</dbReference>
<dbReference type="Pfam" id="PF01381">
    <property type="entry name" value="HTH_3"/>
    <property type="match status" value="1"/>
</dbReference>
<dbReference type="SMART" id="SM00530">
    <property type="entry name" value="HTH_XRE"/>
    <property type="match status" value="1"/>
</dbReference>
<dbReference type="SUPFAM" id="SSF47413">
    <property type="entry name" value="lambda repressor-like DNA-binding domains"/>
    <property type="match status" value="1"/>
</dbReference>
<dbReference type="PROSITE" id="PS50943">
    <property type="entry name" value="HTH_CROC1"/>
    <property type="match status" value="1"/>
</dbReference>
<organism>
    <name type="scientific">Bacillus subtilis (strain 168)</name>
    <dbReference type="NCBI Taxonomy" id="224308"/>
    <lineage>
        <taxon>Bacteria</taxon>
        <taxon>Bacillati</taxon>
        <taxon>Bacillota</taxon>
        <taxon>Bacilli</taxon>
        <taxon>Bacillales</taxon>
        <taxon>Bacillaceae</taxon>
        <taxon>Bacillus</taxon>
    </lineage>
</organism>
<evidence type="ECO:0000255" key="1">
    <source>
        <dbReference type="PROSITE-ProRule" id="PRU00257"/>
    </source>
</evidence>
<sequence>MFGERLKKCRTSKGYSQQRMADFLGITRQGYGKYEIGKAEPDLKTLTKLSNILGVSTDFLLKGTHAQFDLDEILNDPETLIAGYNGMISEEQAKELLYYLLKKEFEEH</sequence>
<accession>O31943</accession>
<keyword id="KW-0238">DNA-binding</keyword>
<keyword id="KW-1185">Reference proteome</keyword>
<keyword id="KW-0804">Transcription</keyword>
<keyword id="KW-0805">Transcription regulation</keyword>
<name>YONR_BACSU</name>
<proteinExistence type="predicted"/>
<protein>
    <recommendedName>
        <fullName>SPbeta prophage-derived uncharacterized HTH-type transcriptional regulator YonR</fullName>
    </recommendedName>
</protein>
<feature type="chain" id="PRO_0000360439" description="SPbeta prophage-derived uncharacterized HTH-type transcriptional regulator YonR">
    <location>
        <begin position="1"/>
        <end position="108"/>
    </location>
</feature>
<feature type="domain" description="HTH cro/C1-type" evidence="1">
    <location>
        <begin position="6"/>
        <end position="60"/>
    </location>
</feature>
<feature type="DNA-binding region" description="H-T-H motif" evidence="1">
    <location>
        <begin position="17"/>
        <end position="36"/>
    </location>
</feature>
<reference key="1">
    <citation type="journal article" date="1997" name="Nature">
        <title>The complete genome sequence of the Gram-positive bacterium Bacillus subtilis.</title>
        <authorList>
            <person name="Kunst F."/>
            <person name="Ogasawara N."/>
            <person name="Moszer I."/>
            <person name="Albertini A.M."/>
            <person name="Alloni G."/>
            <person name="Azevedo V."/>
            <person name="Bertero M.G."/>
            <person name="Bessieres P."/>
            <person name="Bolotin A."/>
            <person name="Borchert S."/>
            <person name="Borriss R."/>
            <person name="Boursier L."/>
            <person name="Brans A."/>
            <person name="Braun M."/>
            <person name="Brignell S.C."/>
            <person name="Bron S."/>
            <person name="Brouillet S."/>
            <person name="Bruschi C.V."/>
            <person name="Caldwell B."/>
            <person name="Capuano V."/>
            <person name="Carter N.M."/>
            <person name="Choi S.-K."/>
            <person name="Codani J.-J."/>
            <person name="Connerton I.F."/>
            <person name="Cummings N.J."/>
            <person name="Daniel R.A."/>
            <person name="Denizot F."/>
            <person name="Devine K.M."/>
            <person name="Duesterhoeft A."/>
            <person name="Ehrlich S.D."/>
            <person name="Emmerson P.T."/>
            <person name="Entian K.-D."/>
            <person name="Errington J."/>
            <person name="Fabret C."/>
            <person name="Ferrari E."/>
            <person name="Foulger D."/>
            <person name="Fritz C."/>
            <person name="Fujita M."/>
            <person name="Fujita Y."/>
            <person name="Fuma S."/>
            <person name="Galizzi A."/>
            <person name="Galleron N."/>
            <person name="Ghim S.-Y."/>
            <person name="Glaser P."/>
            <person name="Goffeau A."/>
            <person name="Golightly E.J."/>
            <person name="Grandi G."/>
            <person name="Guiseppi G."/>
            <person name="Guy B.J."/>
            <person name="Haga K."/>
            <person name="Haiech J."/>
            <person name="Harwood C.R."/>
            <person name="Henaut A."/>
            <person name="Hilbert H."/>
            <person name="Holsappel S."/>
            <person name="Hosono S."/>
            <person name="Hullo M.-F."/>
            <person name="Itaya M."/>
            <person name="Jones L.-M."/>
            <person name="Joris B."/>
            <person name="Karamata D."/>
            <person name="Kasahara Y."/>
            <person name="Klaerr-Blanchard M."/>
            <person name="Klein C."/>
            <person name="Kobayashi Y."/>
            <person name="Koetter P."/>
            <person name="Koningstein G."/>
            <person name="Krogh S."/>
            <person name="Kumano M."/>
            <person name="Kurita K."/>
            <person name="Lapidus A."/>
            <person name="Lardinois S."/>
            <person name="Lauber J."/>
            <person name="Lazarevic V."/>
            <person name="Lee S.-M."/>
            <person name="Levine A."/>
            <person name="Liu H."/>
            <person name="Masuda S."/>
            <person name="Mauel C."/>
            <person name="Medigue C."/>
            <person name="Medina N."/>
            <person name="Mellado R.P."/>
            <person name="Mizuno M."/>
            <person name="Moestl D."/>
            <person name="Nakai S."/>
            <person name="Noback M."/>
            <person name="Noone D."/>
            <person name="O'Reilly M."/>
            <person name="Ogawa K."/>
            <person name="Ogiwara A."/>
            <person name="Oudega B."/>
            <person name="Park S.-H."/>
            <person name="Parro V."/>
            <person name="Pohl T.M."/>
            <person name="Portetelle D."/>
            <person name="Porwollik S."/>
            <person name="Prescott A.M."/>
            <person name="Presecan E."/>
            <person name="Pujic P."/>
            <person name="Purnelle B."/>
            <person name="Rapoport G."/>
            <person name="Rey M."/>
            <person name="Reynolds S."/>
            <person name="Rieger M."/>
            <person name="Rivolta C."/>
            <person name="Rocha E."/>
            <person name="Roche B."/>
            <person name="Rose M."/>
            <person name="Sadaie Y."/>
            <person name="Sato T."/>
            <person name="Scanlan E."/>
            <person name="Schleich S."/>
            <person name="Schroeter R."/>
            <person name="Scoffone F."/>
            <person name="Sekiguchi J."/>
            <person name="Sekowska A."/>
            <person name="Seror S.J."/>
            <person name="Serror P."/>
            <person name="Shin B.-S."/>
            <person name="Soldo B."/>
            <person name="Sorokin A."/>
            <person name="Tacconi E."/>
            <person name="Takagi T."/>
            <person name="Takahashi H."/>
            <person name="Takemaru K."/>
            <person name="Takeuchi M."/>
            <person name="Tamakoshi A."/>
            <person name="Tanaka T."/>
            <person name="Terpstra P."/>
            <person name="Tognoni A."/>
            <person name="Tosato V."/>
            <person name="Uchiyama S."/>
            <person name="Vandenbol M."/>
            <person name="Vannier F."/>
            <person name="Vassarotti A."/>
            <person name="Viari A."/>
            <person name="Wambutt R."/>
            <person name="Wedler E."/>
            <person name="Wedler H."/>
            <person name="Weitzenegger T."/>
            <person name="Winters P."/>
            <person name="Wipat A."/>
            <person name="Yamamoto H."/>
            <person name="Yamane K."/>
            <person name="Yasumoto K."/>
            <person name="Yata K."/>
            <person name="Yoshida K."/>
            <person name="Yoshikawa H.-F."/>
            <person name="Zumstein E."/>
            <person name="Yoshikawa H."/>
            <person name="Danchin A."/>
        </authorList>
    </citation>
    <scope>NUCLEOTIDE SEQUENCE [LARGE SCALE GENOMIC DNA]</scope>
    <source>
        <strain>168</strain>
    </source>
</reference>
<gene>
    <name type="primary">yonR</name>
    <name type="ordered locus">BSU21020</name>
</gene>